<organism>
    <name type="scientific">Saccharomyces cerevisiae (strain ATCC 204508 / S288c)</name>
    <name type="common">Baker's yeast</name>
    <dbReference type="NCBI Taxonomy" id="559292"/>
    <lineage>
        <taxon>Eukaryota</taxon>
        <taxon>Fungi</taxon>
        <taxon>Dikarya</taxon>
        <taxon>Ascomycota</taxon>
        <taxon>Saccharomycotina</taxon>
        <taxon>Saccharomycetes</taxon>
        <taxon>Saccharomycetales</taxon>
        <taxon>Saccharomycetaceae</taxon>
        <taxon>Saccharomyces</taxon>
    </lineage>
</organism>
<gene>
    <name evidence="4" type="ordered locus">YHR069C-A</name>
</gene>
<accession>A0A023PZI4</accession>
<name>YH069_YEAST</name>
<protein>
    <recommendedName>
        <fullName evidence="2">Putative uncharacterized membrane protein YHR069C-A</fullName>
    </recommendedName>
</protein>
<comment type="subcellular location">
    <subcellularLocation>
        <location evidence="1">Membrane</location>
        <topology evidence="1">Multi-pass membrane protein</topology>
    </subcellularLocation>
</comment>
<comment type="miscellaneous">
    <text evidence="2">Completely overlaps TRM5.</text>
</comment>
<comment type="caution">
    <text evidence="3">Product of a dubious gene prediction unlikely to encode a functional protein. Because of that it is not part of the S.cerevisiae S288c complete/reference proteome set.</text>
</comment>
<proteinExistence type="uncertain"/>
<sequence length="120" mass="13252">MDSCSSTPFVTGVLLPSAVFSFLFCTLVSSSFGLDEFNLTTCGIRGTLKMQFLKFLENTLIFLGSGNLTAHIGILVMKNDLSNSRIWRFTGGLYGNTPDILHELINLLNFWNTGSAIFMQ</sequence>
<feature type="chain" id="PRO_0000431023" description="Putative uncharacterized membrane protein YHR069C-A">
    <location>
        <begin position="1"/>
        <end position="120"/>
    </location>
</feature>
<feature type="transmembrane region" description="Helical; Name=1" evidence="1">
    <location>
        <begin position="8"/>
        <end position="28"/>
    </location>
</feature>
<feature type="transmembrane region" description="Helical; Name=2" evidence="1">
    <location>
        <begin position="55"/>
        <end position="75"/>
    </location>
</feature>
<reference key="1">
    <citation type="journal article" date="1994" name="Science">
        <title>Complete nucleotide sequence of Saccharomyces cerevisiae chromosome VIII.</title>
        <authorList>
            <person name="Johnston M."/>
            <person name="Andrews S."/>
            <person name="Brinkman R."/>
            <person name="Cooper J."/>
            <person name="Ding H."/>
            <person name="Dover J."/>
            <person name="Du Z."/>
            <person name="Favello A."/>
            <person name="Fulton L."/>
            <person name="Gattung S."/>
            <person name="Geisel C."/>
            <person name="Kirsten J."/>
            <person name="Kucaba T."/>
            <person name="Hillier L.W."/>
            <person name="Jier M."/>
            <person name="Johnston L."/>
            <person name="Langston Y."/>
            <person name="Latreille P."/>
            <person name="Louis E.J."/>
            <person name="Macri C."/>
            <person name="Mardis E."/>
            <person name="Menezes S."/>
            <person name="Mouser L."/>
            <person name="Nhan M."/>
            <person name="Rifkin L."/>
            <person name="Riles L."/>
            <person name="St Peter H."/>
            <person name="Trevaskis E."/>
            <person name="Vaughan K."/>
            <person name="Vignati D."/>
            <person name="Wilcox L."/>
            <person name="Wohldman P."/>
            <person name="Waterston R."/>
            <person name="Wilson R."/>
            <person name="Vaudin M."/>
        </authorList>
    </citation>
    <scope>NUCLEOTIDE SEQUENCE [LARGE SCALE GENOMIC DNA]</scope>
    <source>
        <strain>ATCC 204508 / S288c</strain>
    </source>
</reference>
<reference key="2">
    <citation type="journal article" date="2014" name="G3 (Bethesda)">
        <title>The reference genome sequence of Saccharomyces cerevisiae: Then and now.</title>
        <authorList>
            <person name="Engel S.R."/>
            <person name="Dietrich F.S."/>
            <person name="Fisk D.G."/>
            <person name="Binkley G."/>
            <person name="Balakrishnan R."/>
            <person name="Costanzo M.C."/>
            <person name="Dwight S.S."/>
            <person name="Hitz B.C."/>
            <person name="Karra K."/>
            <person name="Nash R.S."/>
            <person name="Weng S."/>
            <person name="Wong E.D."/>
            <person name="Lloyd P."/>
            <person name="Skrzypek M.S."/>
            <person name="Miyasato S.R."/>
            <person name="Simison M."/>
            <person name="Cherry J.M."/>
        </authorList>
    </citation>
    <scope>GENOME REANNOTATION</scope>
    <source>
        <strain>ATCC 204508 / S288c</strain>
    </source>
</reference>
<dbReference type="EMBL" id="KJ412259">
    <property type="protein sequence ID" value="AHX39302.1"/>
    <property type="molecule type" value="Genomic_DNA"/>
</dbReference>
<dbReference type="STRING" id="4932.YHR069C-A"/>
<dbReference type="PaxDb" id="4932-YHR069C-A"/>
<dbReference type="EnsemblFungi" id="YHR069C-A_mRNA">
    <property type="protein sequence ID" value="YHR069C-A"/>
    <property type="gene ID" value="YHR069C-A"/>
</dbReference>
<dbReference type="AGR" id="SGD:S000028779"/>
<dbReference type="SGD" id="S000028779">
    <property type="gene designation" value="YHR069C-A"/>
</dbReference>
<dbReference type="HOGENOM" id="CLU_2050980_0_0_1"/>
<dbReference type="GO" id="GO:0016020">
    <property type="term" value="C:membrane"/>
    <property type="evidence" value="ECO:0007669"/>
    <property type="project" value="UniProtKB-SubCell"/>
</dbReference>
<evidence type="ECO:0000255" key="1"/>
<evidence type="ECO:0000305" key="2"/>
<evidence type="ECO:0000305" key="3">
    <source>
    </source>
</evidence>
<evidence type="ECO:0000312" key="4">
    <source>
        <dbReference type="SGD" id="S000028779"/>
    </source>
</evidence>
<keyword id="KW-0472">Membrane</keyword>
<keyword id="KW-0812">Transmembrane</keyword>
<keyword id="KW-1133">Transmembrane helix</keyword>